<name>RUTE_SHIDS</name>
<protein>
    <recommendedName>
        <fullName evidence="1">Probable malonic semialdehyde reductase RutE</fullName>
        <ecNumber evidence="1">1.1.1.298</ecNumber>
    </recommendedName>
</protein>
<accession>Q32HQ3</accession>
<organism>
    <name type="scientific">Shigella dysenteriae serotype 1 (strain Sd197)</name>
    <dbReference type="NCBI Taxonomy" id="300267"/>
    <lineage>
        <taxon>Bacteria</taxon>
        <taxon>Pseudomonadati</taxon>
        <taxon>Pseudomonadota</taxon>
        <taxon>Gammaproteobacteria</taxon>
        <taxon>Enterobacterales</taxon>
        <taxon>Enterobacteriaceae</taxon>
        <taxon>Shigella</taxon>
    </lineage>
</organism>
<keyword id="KW-0285">Flavoprotein</keyword>
<keyword id="KW-0288">FMN</keyword>
<keyword id="KW-0520">NAD</keyword>
<keyword id="KW-0521">NADP</keyword>
<keyword id="KW-0560">Oxidoreductase</keyword>
<keyword id="KW-1185">Reference proteome</keyword>
<dbReference type="EC" id="1.1.1.298" evidence="1"/>
<dbReference type="EMBL" id="CP000034">
    <property type="protein sequence ID" value="ABB61152.1"/>
    <property type="molecule type" value="Genomic_DNA"/>
</dbReference>
<dbReference type="RefSeq" id="WP_001001203.1">
    <property type="nucleotide sequence ID" value="NC_007606.1"/>
</dbReference>
<dbReference type="RefSeq" id="YP_402643.1">
    <property type="nucleotide sequence ID" value="NC_007606.1"/>
</dbReference>
<dbReference type="SMR" id="Q32HQ3"/>
<dbReference type="STRING" id="300267.SDY_0983"/>
<dbReference type="EnsemblBacteria" id="ABB61152">
    <property type="protein sequence ID" value="ABB61152"/>
    <property type="gene ID" value="SDY_0983"/>
</dbReference>
<dbReference type="KEGG" id="sdy:SDY_0983"/>
<dbReference type="PATRIC" id="fig|300267.13.peg.1143"/>
<dbReference type="HOGENOM" id="CLU_084441_0_0_6"/>
<dbReference type="Proteomes" id="UP000002716">
    <property type="component" value="Chromosome"/>
</dbReference>
<dbReference type="GO" id="GO:0035527">
    <property type="term" value="F:3-hydroxypropionate dehydrogenase (NADP+) activity"/>
    <property type="evidence" value="ECO:0007669"/>
    <property type="project" value="UniProtKB-UniRule"/>
</dbReference>
<dbReference type="GO" id="GO:0019740">
    <property type="term" value="P:nitrogen utilization"/>
    <property type="evidence" value="ECO:0007669"/>
    <property type="project" value="UniProtKB-UniRule"/>
</dbReference>
<dbReference type="GO" id="GO:0006212">
    <property type="term" value="P:uracil catabolic process"/>
    <property type="evidence" value="ECO:0007669"/>
    <property type="project" value="UniProtKB-UniRule"/>
</dbReference>
<dbReference type="CDD" id="cd02148">
    <property type="entry name" value="RutE-like"/>
    <property type="match status" value="1"/>
</dbReference>
<dbReference type="FunFam" id="3.40.109.10:FF:000003">
    <property type="entry name" value="Probable malonic semialdehyde reductase RutE"/>
    <property type="match status" value="1"/>
</dbReference>
<dbReference type="Gene3D" id="3.40.109.10">
    <property type="entry name" value="NADH Oxidase"/>
    <property type="match status" value="1"/>
</dbReference>
<dbReference type="HAMAP" id="MF_01204">
    <property type="entry name" value="Oxidoreductase_RutE_HadB"/>
    <property type="match status" value="1"/>
</dbReference>
<dbReference type="InterPro" id="IPR029479">
    <property type="entry name" value="Nitroreductase"/>
</dbReference>
<dbReference type="InterPro" id="IPR000415">
    <property type="entry name" value="Nitroreductase-like"/>
</dbReference>
<dbReference type="InterPro" id="IPR050461">
    <property type="entry name" value="Nitroreductase_HadB/RutE"/>
</dbReference>
<dbReference type="InterPro" id="IPR023936">
    <property type="entry name" value="RutE-like"/>
</dbReference>
<dbReference type="NCBIfam" id="NF003768">
    <property type="entry name" value="PRK05365.1"/>
    <property type="match status" value="1"/>
</dbReference>
<dbReference type="PANTHER" id="PTHR43543">
    <property type="entry name" value="MALONIC SEMIALDEHYDE REDUCTASE RUTE-RELATED"/>
    <property type="match status" value="1"/>
</dbReference>
<dbReference type="PANTHER" id="PTHR43543:SF1">
    <property type="entry name" value="MALONIC SEMIALDEHYDE REDUCTASE RUTE-RELATED"/>
    <property type="match status" value="1"/>
</dbReference>
<dbReference type="Pfam" id="PF00881">
    <property type="entry name" value="Nitroreductase"/>
    <property type="match status" value="1"/>
</dbReference>
<dbReference type="SUPFAM" id="SSF55469">
    <property type="entry name" value="FMN-dependent nitroreductase-like"/>
    <property type="match status" value="1"/>
</dbReference>
<sequence>MNEAVSPSALSTLFTDARTHNGWRETPVSDETLRELYALMKWGPTSANCSPARIVFIRTAEGKERLRPALSSGNLQKTLTAPVTAIVAWDSEFYERLPQLFPHGDARSWFTSSPQLAEETAFRNSSMQAAYLIIACRALGLDTGPMSGFDRQHVDDAFFAVSTLKSNLLINIGYGDSSKLFARLPRLSFEEACGLL</sequence>
<gene>
    <name evidence="1" type="primary">rutE</name>
    <name type="ordered locus">SDY_0983</name>
</gene>
<feature type="chain" id="PRO_1000066145" description="Probable malonic semialdehyde reductase RutE">
    <location>
        <begin position="1"/>
        <end position="196"/>
    </location>
</feature>
<evidence type="ECO:0000255" key="1">
    <source>
        <dbReference type="HAMAP-Rule" id="MF_01204"/>
    </source>
</evidence>
<proteinExistence type="inferred from homology"/>
<reference key="1">
    <citation type="journal article" date="2005" name="Nucleic Acids Res.">
        <title>Genome dynamics and diversity of Shigella species, the etiologic agents of bacillary dysentery.</title>
        <authorList>
            <person name="Yang F."/>
            <person name="Yang J."/>
            <person name="Zhang X."/>
            <person name="Chen L."/>
            <person name="Jiang Y."/>
            <person name="Yan Y."/>
            <person name="Tang X."/>
            <person name="Wang J."/>
            <person name="Xiong Z."/>
            <person name="Dong J."/>
            <person name="Xue Y."/>
            <person name="Zhu Y."/>
            <person name="Xu X."/>
            <person name="Sun L."/>
            <person name="Chen S."/>
            <person name="Nie H."/>
            <person name="Peng J."/>
            <person name="Xu J."/>
            <person name="Wang Y."/>
            <person name="Yuan Z."/>
            <person name="Wen Y."/>
            <person name="Yao Z."/>
            <person name="Shen Y."/>
            <person name="Qiang B."/>
            <person name="Hou Y."/>
            <person name="Yu J."/>
            <person name="Jin Q."/>
        </authorList>
    </citation>
    <scope>NUCLEOTIDE SEQUENCE [LARGE SCALE GENOMIC DNA]</scope>
    <source>
        <strain>Sd197</strain>
    </source>
</reference>
<comment type="function">
    <text evidence="1">May reduce toxic product malonic semialdehyde to 3-hydroxypropionic acid, which is excreted.</text>
</comment>
<comment type="catalytic activity">
    <reaction evidence="1">
        <text>3-hydroxypropanoate + NADP(+) = 3-oxopropanoate + NADPH + H(+)</text>
        <dbReference type="Rhea" id="RHEA:26438"/>
        <dbReference type="ChEBI" id="CHEBI:15378"/>
        <dbReference type="ChEBI" id="CHEBI:16510"/>
        <dbReference type="ChEBI" id="CHEBI:33190"/>
        <dbReference type="ChEBI" id="CHEBI:57783"/>
        <dbReference type="ChEBI" id="CHEBI:58349"/>
        <dbReference type="EC" id="1.1.1.298"/>
    </reaction>
</comment>
<comment type="cofactor">
    <cofactor evidence="1">
        <name>FMN</name>
        <dbReference type="ChEBI" id="CHEBI:58210"/>
    </cofactor>
</comment>
<comment type="induction">
    <text evidence="1">Up-regulated by the nitrogen regulatory protein C (NtrC also called GlnG) and repressed by RutR.</text>
</comment>
<comment type="similarity">
    <text evidence="1">Belongs to the nitroreductase family. HadB/RutE subfamily.</text>
</comment>